<protein>
    <recommendedName>
        <fullName evidence="1">Small, acid-soluble spore protein K</fullName>
        <shortName evidence="1">SASP K</shortName>
    </recommendedName>
</protein>
<evidence type="ECO:0000255" key="1">
    <source>
        <dbReference type="HAMAP-Rule" id="MF_01504"/>
    </source>
</evidence>
<evidence type="ECO:0000256" key="2">
    <source>
        <dbReference type="SAM" id="MobiDB-lite"/>
    </source>
</evidence>
<name>SSPK_BACAN</name>
<keyword id="KW-1185">Reference proteome</keyword>
<keyword id="KW-0749">Sporulation</keyword>
<sequence length="52" mass="5946">MGKQAEFWSESKNNSKIDGQPKAKSRFASKRPNGTINTHPQERMRAANQQEE</sequence>
<comment type="subcellular location">
    <subcellularLocation>
        <location evidence="1">Spore core</location>
    </subcellularLocation>
</comment>
<comment type="induction">
    <text evidence="1">Expressed only in the forespore compartment of sporulating cells.</text>
</comment>
<comment type="similarity">
    <text evidence="1">Belongs to the SspK family.</text>
</comment>
<feature type="chain" id="PRO_0000221458" description="Small, acid-soluble spore protein K">
    <location>
        <begin position="1"/>
        <end position="52"/>
    </location>
</feature>
<feature type="region of interest" description="Disordered" evidence="2">
    <location>
        <begin position="1"/>
        <end position="52"/>
    </location>
</feature>
<accession>Q81YW1</accession>
<accession>Q6KXH4</accession>
<gene>
    <name evidence="1" type="primary">sspK</name>
    <name type="ordered locus">BA_0519</name>
    <name type="ordered locus">GBAA_0519</name>
    <name type="ordered locus">BAS0488.1</name>
</gene>
<organism>
    <name type="scientific">Bacillus anthracis</name>
    <dbReference type="NCBI Taxonomy" id="1392"/>
    <lineage>
        <taxon>Bacteria</taxon>
        <taxon>Bacillati</taxon>
        <taxon>Bacillota</taxon>
        <taxon>Bacilli</taxon>
        <taxon>Bacillales</taxon>
        <taxon>Bacillaceae</taxon>
        <taxon>Bacillus</taxon>
        <taxon>Bacillus cereus group</taxon>
    </lineage>
</organism>
<reference key="1">
    <citation type="journal article" date="2003" name="Nature">
        <title>The genome sequence of Bacillus anthracis Ames and comparison to closely related bacteria.</title>
        <authorList>
            <person name="Read T.D."/>
            <person name="Peterson S.N."/>
            <person name="Tourasse N.J."/>
            <person name="Baillie L.W."/>
            <person name="Paulsen I.T."/>
            <person name="Nelson K.E."/>
            <person name="Tettelin H."/>
            <person name="Fouts D.E."/>
            <person name="Eisen J.A."/>
            <person name="Gill S.R."/>
            <person name="Holtzapple E.K."/>
            <person name="Okstad O.A."/>
            <person name="Helgason E."/>
            <person name="Rilstone J."/>
            <person name="Wu M."/>
            <person name="Kolonay J.F."/>
            <person name="Beanan M.J."/>
            <person name="Dodson R.J."/>
            <person name="Brinkac L.M."/>
            <person name="Gwinn M.L."/>
            <person name="DeBoy R.T."/>
            <person name="Madpu R."/>
            <person name="Daugherty S.C."/>
            <person name="Durkin A.S."/>
            <person name="Haft D.H."/>
            <person name="Nelson W.C."/>
            <person name="Peterson J.D."/>
            <person name="Pop M."/>
            <person name="Khouri H.M."/>
            <person name="Radune D."/>
            <person name="Benton J.L."/>
            <person name="Mahamoud Y."/>
            <person name="Jiang L."/>
            <person name="Hance I.R."/>
            <person name="Weidman J.F."/>
            <person name="Berry K.J."/>
            <person name="Plaut R.D."/>
            <person name="Wolf A.M."/>
            <person name="Watkins K.L."/>
            <person name="Nierman W.C."/>
            <person name="Hazen A."/>
            <person name="Cline R.T."/>
            <person name="Redmond C."/>
            <person name="Thwaite J.E."/>
            <person name="White O."/>
            <person name="Salzberg S.L."/>
            <person name="Thomason B."/>
            <person name="Friedlander A.M."/>
            <person name="Koehler T.M."/>
            <person name="Hanna P.C."/>
            <person name="Kolstoe A.-B."/>
            <person name="Fraser C.M."/>
        </authorList>
    </citation>
    <scope>NUCLEOTIDE SEQUENCE [LARGE SCALE GENOMIC DNA]</scope>
    <source>
        <strain>Ames / isolate Porton</strain>
    </source>
</reference>
<reference key="2">
    <citation type="journal article" date="2009" name="J. Bacteriol.">
        <title>The complete genome sequence of Bacillus anthracis Ames 'Ancestor'.</title>
        <authorList>
            <person name="Ravel J."/>
            <person name="Jiang L."/>
            <person name="Stanley S.T."/>
            <person name="Wilson M.R."/>
            <person name="Decker R.S."/>
            <person name="Read T.D."/>
            <person name="Worsham P."/>
            <person name="Keim P.S."/>
            <person name="Salzberg S.L."/>
            <person name="Fraser-Liggett C.M."/>
            <person name="Rasko D.A."/>
        </authorList>
    </citation>
    <scope>NUCLEOTIDE SEQUENCE [LARGE SCALE GENOMIC DNA]</scope>
    <source>
        <strain>Ames ancestor</strain>
    </source>
</reference>
<reference key="3">
    <citation type="submission" date="2004-01" db="EMBL/GenBank/DDBJ databases">
        <title>Complete genome sequence of Bacillus anthracis Sterne.</title>
        <authorList>
            <person name="Brettin T.S."/>
            <person name="Bruce D."/>
            <person name="Challacombe J.F."/>
            <person name="Gilna P."/>
            <person name="Han C."/>
            <person name="Hill K."/>
            <person name="Hitchcock P."/>
            <person name="Jackson P."/>
            <person name="Keim P."/>
            <person name="Longmire J."/>
            <person name="Lucas S."/>
            <person name="Okinaka R."/>
            <person name="Richardson P."/>
            <person name="Rubin E."/>
            <person name="Tice H."/>
        </authorList>
    </citation>
    <scope>NUCLEOTIDE SEQUENCE [LARGE SCALE GENOMIC DNA]</scope>
    <source>
        <strain>Sterne</strain>
    </source>
</reference>
<dbReference type="EMBL" id="AE016879">
    <property type="protein sequence ID" value="AAP24541.1"/>
    <property type="molecule type" value="Genomic_DNA"/>
</dbReference>
<dbReference type="EMBL" id="AE017334">
    <property type="protein sequence ID" value="AAT29613.1"/>
    <property type="molecule type" value="Genomic_DNA"/>
</dbReference>
<dbReference type="EMBL" id="AE017225">
    <property type="status" value="NOT_ANNOTATED_CDS"/>
    <property type="molecule type" value="Genomic_DNA"/>
</dbReference>
<dbReference type="RefSeq" id="NP_843055.1">
    <property type="nucleotide sequence ID" value="NC_003997.3"/>
</dbReference>
<dbReference type="RefSeq" id="WP_000517891.1">
    <property type="nucleotide sequence ID" value="NZ_WXXJ01000029.1"/>
</dbReference>
<dbReference type="STRING" id="261594.GBAA_0519"/>
<dbReference type="DNASU" id="1087755"/>
<dbReference type="KEGG" id="ban:BA_0519"/>
<dbReference type="KEGG" id="bar:GBAA_0519"/>
<dbReference type="PATRIC" id="fig|198094.11.peg.518"/>
<dbReference type="HOGENOM" id="CLU_3076423_0_0_9"/>
<dbReference type="OMA" id="MGRQAEF"/>
<dbReference type="OrthoDB" id="2382188at2"/>
<dbReference type="Proteomes" id="UP000000427">
    <property type="component" value="Chromosome"/>
</dbReference>
<dbReference type="Proteomes" id="UP000000594">
    <property type="component" value="Chromosome"/>
</dbReference>
<dbReference type="GO" id="GO:0042601">
    <property type="term" value="C:endospore-forming forespore"/>
    <property type="evidence" value="ECO:0007669"/>
    <property type="project" value="InterPro"/>
</dbReference>
<dbReference type="GO" id="GO:0030436">
    <property type="term" value="P:asexual sporulation"/>
    <property type="evidence" value="ECO:0007669"/>
    <property type="project" value="UniProtKB-UniRule"/>
</dbReference>
<dbReference type="GO" id="GO:0030435">
    <property type="term" value="P:sporulation resulting in formation of a cellular spore"/>
    <property type="evidence" value="ECO:0007669"/>
    <property type="project" value="UniProtKB-KW"/>
</dbReference>
<dbReference type="HAMAP" id="MF_01504">
    <property type="entry name" value="SspK"/>
    <property type="match status" value="1"/>
</dbReference>
<dbReference type="InterPro" id="IPR012611">
    <property type="entry name" value="SASP_SspK"/>
</dbReference>
<dbReference type="NCBIfam" id="NF002843">
    <property type="entry name" value="PRK03081.1"/>
    <property type="match status" value="1"/>
</dbReference>
<dbReference type="NCBIfam" id="TIGR03091">
    <property type="entry name" value="SASP_sspK"/>
    <property type="match status" value="1"/>
</dbReference>
<dbReference type="Pfam" id="PF08176">
    <property type="entry name" value="SspK"/>
    <property type="match status" value="1"/>
</dbReference>
<proteinExistence type="inferred from homology"/>